<gene>
    <name evidence="1" type="primary">ttcA</name>
    <name type="ordered locus">SSPA1141</name>
</gene>
<sequence length="311" mass="35374">MQEIQKNTKKEQYNLNKLQKRLRRNVGEAIADFNMIEEGDRIMVCLSGGKDSYTMLEILRNLQQSAPINFSLVAVNLDQKQPGFPEHILPAYLEQLGVEYKIVEENTYGIVKEKIPEGKTTCSLCSRLRRGILYRTATELGATKIALGHHRDDILQTLFLNMFYGGKMKGMPPKLMSDDGKHIVIRPLAYCREKDIIRFAEAKAFPIIPCNLCGSQPNLQRQVIADMLRDWDKRYPGRIETMFSAMQNVVPSHLCDTNLFDFKGITHGSEVVDGGDLAFDREEIPLQPAGWQPEEDDTSLEALRLDVIEVK</sequence>
<keyword id="KW-0004">4Fe-4S</keyword>
<keyword id="KW-0067">ATP-binding</keyword>
<keyword id="KW-0963">Cytoplasm</keyword>
<keyword id="KW-0408">Iron</keyword>
<keyword id="KW-0411">Iron-sulfur</keyword>
<keyword id="KW-0460">Magnesium</keyword>
<keyword id="KW-0479">Metal-binding</keyword>
<keyword id="KW-0547">Nucleotide-binding</keyword>
<keyword id="KW-0694">RNA-binding</keyword>
<keyword id="KW-0808">Transferase</keyword>
<keyword id="KW-0819">tRNA processing</keyword>
<keyword id="KW-0820">tRNA-binding</keyword>
<protein>
    <recommendedName>
        <fullName evidence="1">tRNA-cytidine(32) 2-sulfurtransferase</fullName>
        <ecNumber evidence="1">2.8.1.-</ecNumber>
    </recommendedName>
    <alternativeName>
        <fullName evidence="1">Two-thiocytidine biosynthesis protein A</fullName>
    </alternativeName>
    <alternativeName>
        <fullName evidence="1">tRNA 2-thiocytidine biosynthesis protein TtcA</fullName>
    </alternativeName>
</protein>
<feature type="chain" id="PRO_1000188660" description="tRNA-cytidine(32) 2-sulfurtransferase">
    <location>
        <begin position="1"/>
        <end position="311"/>
    </location>
</feature>
<feature type="short sequence motif" description="PP-loop motif" evidence="1">
    <location>
        <begin position="47"/>
        <end position="52"/>
    </location>
</feature>
<feature type="binding site" evidence="1">
    <location>
        <position position="122"/>
    </location>
    <ligand>
        <name>[4Fe-4S] cluster</name>
        <dbReference type="ChEBI" id="CHEBI:49883"/>
    </ligand>
</feature>
<feature type="binding site" evidence="1">
    <location>
        <position position="125"/>
    </location>
    <ligand>
        <name>[4Fe-4S] cluster</name>
        <dbReference type="ChEBI" id="CHEBI:49883"/>
    </ligand>
</feature>
<feature type="binding site" evidence="1">
    <location>
        <position position="213"/>
    </location>
    <ligand>
        <name>[4Fe-4S] cluster</name>
        <dbReference type="ChEBI" id="CHEBI:49883"/>
    </ligand>
</feature>
<dbReference type="EC" id="2.8.1.-" evidence="1"/>
<dbReference type="EMBL" id="FM200053">
    <property type="protein sequence ID" value="CAR59303.1"/>
    <property type="molecule type" value="Genomic_DNA"/>
</dbReference>
<dbReference type="RefSeq" id="WP_001156210.1">
    <property type="nucleotide sequence ID" value="NC_011147.1"/>
</dbReference>
<dbReference type="SMR" id="B5BJ71"/>
<dbReference type="KEGG" id="sek:SSPA1141"/>
<dbReference type="HOGENOM" id="CLU_026481_0_0_6"/>
<dbReference type="Proteomes" id="UP000001869">
    <property type="component" value="Chromosome"/>
</dbReference>
<dbReference type="GO" id="GO:0005737">
    <property type="term" value="C:cytoplasm"/>
    <property type="evidence" value="ECO:0007669"/>
    <property type="project" value="UniProtKB-SubCell"/>
</dbReference>
<dbReference type="GO" id="GO:0051539">
    <property type="term" value="F:4 iron, 4 sulfur cluster binding"/>
    <property type="evidence" value="ECO:0007669"/>
    <property type="project" value="UniProtKB-UniRule"/>
</dbReference>
<dbReference type="GO" id="GO:0005524">
    <property type="term" value="F:ATP binding"/>
    <property type="evidence" value="ECO:0007669"/>
    <property type="project" value="UniProtKB-UniRule"/>
</dbReference>
<dbReference type="GO" id="GO:0000287">
    <property type="term" value="F:magnesium ion binding"/>
    <property type="evidence" value="ECO:0007669"/>
    <property type="project" value="UniProtKB-UniRule"/>
</dbReference>
<dbReference type="GO" id="GO:0016783">
    <property type="term" value="F:sulfurtransferase activity"/>
    <property type="evidence" value="ECO:0007669"/>
    <property type="project" value="UniProtKB-UniRule"/>
</dbReference>
<dbReference type="GO" id="GO:0000049">
    <property type="term" value="F:tRNA binding"/>
    <property type="evidence" value="ECO:0007669"/>
    <property type="project" value="UniProtKB-KW"/>
</dbReference>
<dbReference type="GO" id="GO:0034227">
    <property type="term" value="P:tRNA thio-modification"/>
    <property type="evidence" value="ECO:0007669"/>
    <property type="project" value="UniProtKB-UniRule"/>
</dbReference>
<dbReference type="CDD" id="cd24138">
    <property type="entry name" value="TtcA-like"/>
    <property type="match status" value="1"/>
</dbReference>
<dbReference type="FunFam" id="3.40.50.620:FF:000046">
    <property type="entry name" value="tRNA-cytidine(32) 2-sulfurtransferase"/>
    <property type="match status" value="1"/>
</dbReference>
<dbReference type="Gene3D" id="3.40.50.620">
    <property type="entry name" value="HUPs"/>
    <property type="match status" value="1"/>
</dbReference>
<dbReference type="HAMAP" id="MF_01850">
    <property type="entry name" value="TtcA"/>
    <property type="match status" value="1"/>
</dbReference>
<dbReference type="InterPro" id="IPR014729">
    <property type="entry name" value="Rossmann-like_a/b/a_fold"/>
</dbReference>
<dbReference type="InterPro" id="IPR011063">
    <property type="entry name" value="TilS/TtcA_N"/>
</dbReference>
<dbReference type="InterPro" id="IPR012089">
    <property type="entry name" value="tRNA_Cyd_32_2_STrfase"/>
</dbReference>
<dbReference type="InterPro" id="IPR035107">
    <property type="entry name" value="tRNA_thiolation_TtcA_Ctu1"/>
</dbReference>
<dbReference type="NCBIfam" id="NF007972">
    <property type="entry name" value="PRK10696.1"/>
    <property type="match status" value="1"/>
</dbReference>
<dbReference type="PANTHER" id="PTHR43686:SF1">
    <property type="entry name" value="AMINOTRAN_5 DOMAIN-CONTAINING PROTEIN"/>
    <property type="match status" value="1"/>
</dbReference>
<dbReference type="PANTHER" id="PTHR43686">
    <property type="entry name" value="SULFURTRANSFERASE-RELATED"/>
    <property type="match status" value="1"/>
</dbReference>
<dbReference type="Pfam" id="PF01171">
    <property type="entry name" value="ATP_bind_3"/>
    <property type="match status" value="1"/>
</dbReference>
<dbReference type="PIRSF" id="PIRSF004976">
    <property type="entry name" value="ATPase_YdaO"/>
    <property type="match status" value="1"/>
</dbReference>
<dbReference type="SUPFAM" id="SSF52402">
    <property type="entry name" value="Adenine nucleotide alpha hydrolases-like"/>
    <property type="match status" value="1"/>
</dbReference>
<proteinExistence type="inferred from homology"/>
<reference key="1">
    <citation type="journal article" date="2009" name="BMC Genomics">
        <title>Pseudogene accumulation in the evolutionary histories of Salmonella enterica serovars Paratyphi A and Typhi.</title>
        <authorList>
            <person name="Holt K.E."/>
            <person name="Thomson N.R."/>
            <person name="Wain J."/>
            <person name="Langridge G.C."/>
            <person name="Hasan R."/>
            <person name="Bhutta Z.A."/>
            <person name="Quail M.A."/>
            <person name="Norbertczak H."/>
            <person name="Walker D."/>
            <person name="Simmonds M."/>
            <person name="White B."/>
            <person name="Bason N."/>
            <person name="Mungall K."/>
            <person name="Dougan G."/>
            <person name="Parkhill J."/>
        </authorList>
    </citation>
    <scope>NUCLEOTIDE SEQUENCE [LARGE SCALE GENOMIC DNA]</scope>
    <source>
        <strain>AKU_12601</strain>
    </source>
</reference>
<evidence type="ECO:0000255" key="1">
    <source>
        <dbReference type="HAMAP-Rule" id="MF_01850"/>
    </source>
</evidence>
<organism>
    <name type="scientific">Salmonella paratyphi A (strain AKU_12601)</name>
    <dbReference type="NCBI Taxonomy" id="554290"/>
    <lineage>
        <taxon>Bacteria</taxon>
        <taxon>Pseudomonadati</taxon>
        <taxon>Pseudomonadota</taxon>
        <taxon>Gammaproteobacteria</taxon>
        <taxon>Enterobacterales</taxon>
        <taxon>Enterobacteriaceae</taxon>
        <taxon>Salmonella</taxon>
    </lineage>
</organism>
<name>TTCA_SALPK</name>
<accession>B5BJ71</accession>
<comment type="function">
    <text evidence="1">Catalyzes the ATP-dependent 2-thiolation of cytidine in position 32 of tRNA, to form 2-thiocytidine (s(2)C32). The sulfur atoms are provided by the cysteine/cysteine desulfurase (IscS) system.</text>
</comment>
<comment type="catalytic activity">
    <reaction evidence="1">
        <text>cytidine(32) in tRNA + S-sulfanyl-L-cysteinyl-[cysteine desulfurase] + AH2 + ATP = 2-thiocytidine(32) in tRNA + L-cysteinyl-[cysteine desulfurase] + A + AMP + diphosphate + H(+)</text>
        <dbReference type="Rhea" id="RHEA:57048"/>
        <dbReference type="Rhea" id="RHEA-COMP:10288"/>
        <dbReference type="Rhea" id="RHEA-COMP:12157"/>
        <dbReference type="Rhea" id="RHEA-COMP:12158"/>
        <dbReference type="Rhea" id="RHEA-COMP:14821"/>
        <dbReference type="ChEBI" id="CHEBI:13193"/>
        <dbReference type="ChEBI" id="CHEBI:15378"/>
        <dbReference type="ChEBI" id="CHEBI:17499"/>
        <dbReference type="ChEBI" id="CHEBI:29950"/>
        <dbReference type="ChEBI" id="CHEBI:30616"/>
        <dbReference type="ChEBI" id="CHEBI:33019"/>
        <dbReference type="ChEBI" id="CHEBI:61963"/>
        <dbReference type="ChEBI" id="CHEBI:82748"/>
        <dbReference type="ChEBI" id="CHEBI:141453"/>
        <dbReference type="ChEBI" id="CHEBI:456215"/>
    </reaction>
    <physiologicalReaction direction="left-to-right" evidence="1">
        <dbReference type="Rhea" id="RHEA:57049"/>
    </physiologicalReaction>
</comment>
<comment type="cofactor">
    <cofactor evidence="1">
        <name>Mg(2+)</name>
        <dbReference type="ChEBI" id="CHEBI:18420"/>
    </cofactor>
</comment>
<comment type="cofactor">
    <cofactor evidence="1">
        <name>[4Fe-4S] cluster</name>
        <dbReference type="ChEBI" id="CHEBI:49883"/>
    </cofactor>
    <text evidence="1">Binds 1 [4Fe-4S] cluster per subunit. The cluster is chelated by three Cys residues, the fourth Fe has a free coordination site that may bind a sulfur atom transferred from the persulfide of IscS.</text>
</comment>
<comment type="pathway">
    <text evidence="1">tRNA modification.</text>
</comment>
<comment type="subunit">
    <text evidence="1">Homodimer.</text>
</comment>
<comment type="subcellular location">
    <subcellularLocation>
        <location evidence="1">Cytoplasm</location>
    </subcellularLocation>
</comment>
<comment type="miscellaneous">
    <text evidence="1">The thiolation reaction likely consists of two steps: a first activation step by ATP to form an adenylated intermediate of the target base of tRNA, and a second nucleophilic substitution step of the sulfur (S) atom supplied by the hydrosulfide attached to the Fe-S cluster.</text>
</comment>
<comment type="similarity">
    <text evidence="1">Belongs to the TtcA family.</text>
</comment>